<feature type="chain" id="PRO_0000068913" description="5-hydroxytryptamine receptor 1B">
    <location>
        <begin position="1"/>
        <end position="388"/>
    </location>
</feature>
<feature type="topological domain" description="Extracellular" evidence="1">
    <location>
        <begin position="1"/>
        <end position="45"/>
    </location>
</feature>
<feature type="transmembrane region" description="Helical; Name=1" evidence="1">
    <location>
        <begin position="46"/>
        <end position="71"/>
    </location>
</feature>
<feature type="topological domain" description="Cytoplasmic" evidence="1">
    <location>
        <begin position="72"/>
        <end position="85"/>
    </location>
</feature>
<feature type="transmembrane region" description="Helical; Name=2" evidence="1">
    <location>
        <begin position="86"/>
        <end position="110"/>
    </location>
</feature>
<feature type="topological domain" description="Extracellular" evidence="1">
    <location>
        <begin position="111"/>
        <end position="118"/>
    </location>
</feature>
<feature type="transmembrane region" description="Helical; Name=3" evidence="1">
    <location>
        <begin position="119"/>
        <end position="144"/>
    </location>
</feature>
<feature type="topological domain" description="Cytoplasmic" evidence="1">
    <location>
        <begin position="145"/>
        <end position="164"/>
    </location>
</feature>
<feature type="transmembrane region" description="Helical; Name=4" evidence="1">
    <location>
        <begin position="165"/>
        <end position="183"/>
    </location>
</feature>
<feature type="topological domain" description="Extracellular" evidence="1">
    <location>
        <begin position="184"/>
        <end position="203"/>
    </location>
</feature>
<feature type="transmembrane region" description="Helical; Name=5" evidence="1">
    <location>
        <begin position="204"/>
        <end position="227"/>
    </location>
</feature>
<feature type="topological domain" description="Cytoplasmic" evidence="1">
    <location>
        <begin position="228"/>
        <end position="313"/>
    </location>
</feature>
<feature type="transmembrane region" description="Helical; Name=6" evidence="1">
    <location>
        <begin position="314"/>
        <end position="335"/>
    </location>
</feature>
<feature type="topological domain" description="Extracellular" evidence="1">
    <location>
        <begin position="336"/>
        <end position="345"/>
    </location>
</feature>
<feature type="transmembrane region" description="Helical; Name=7" evidence="1">
    <location>
        <begin position="346"/>
        <end position="368"/>
    </location>
</feature>
<feature type="topological domain" description="Cytoplasmic" evidence="1">
    <location>
        <begin position="369"/>
        <end position="388"/>
    </location>
</feature>
<feature type="region of interest" description="Disordered" evidence="5">
    <location>
        <begin position="1"/>
        <end position="29"/>
    </location>
</feature>
<feature type="region of interest" description="Disordered" evidence="5">
    <location>
        <begin position="249"/>
        <end position="282"/>
    </location>
</feature>
<feature type="short sequence motif" description="DRY motif; important for ligand-induced conformation changes and signaling" evidence="2">
    <location>
        <begin position="145"/>
        <end position="147"/>
    </location>
</feature>
<feature type="short sequence motif" description="NPxxY motif; important for ligand-induced conformation changes and signaling" evidence="2">
    <location>
        <begin position="363"/>
        <end position="367"/>
    </location>
</feature>
<feature type="compositionally biased region" description="Polar residues" evidence="5">
    <location>
        <begin position="12"/>
        <end position="29"/>
    </location>
</feature>
<feature type="compositionally biased region" description="Low complexity" evidence="5">
    <location>
        <begin position="255"/>
        <end position="270"/>
    </location>
</feature>
<feature type="binding site" evidence="1">
    <location>
        <position position="128"/>
    </location>
    <ligand>
        <name>ergotamine</name>
        <dbReference type="ChEBI" id="CHEBI:190463"/>
        <note>agonist</note>
    </ligand>
</feature>
<feature type="binding site" evidence="1">
    <location>
        <position position="133"/>
    </location>
    <ligand>
        <name>ergotamine</name>
        <dbReference type="ChEBI" id="CHEBI:190463"/>
        <note>agonist</note>
    </ligand>
</feature>
<feature type="binding site" evidence="1">
    <location>
        <position position="199"/>
    </location>
    <ligand>
        <name>ergotamine</name>
        <dbReference type="ChEBI" id="CHEBI:190463"/>
        <note>agonist</note>
    </ligand>
</feature>
<feature type="site" description="Important for species-specific agonist sensitivity" evidence="1">
    <location>
        <position position="353"/>
    </location>
</feature>
<feature type="glycosylation site" description="N-linked (GlcNAc...) asparagine" evidence="3">
    <location>
        <position position="22"/>
    </location>
</feature>
<feature type="glycosylation site" description="N-linked (GlcNAc...) asparagine" evidence="3">
    <location>
        <position position="30"/>
    </location>
</feature>
<feature type="disulfide bond" evidence="4">
    <location>
        <begin position="121"/>
        <end position="197"/>
    </location>
</feature>
<reference key="1">
    <citation type="journal article" date="1994" name="Mol. Pharmacol.">
        <title>The cloning and expression of an OK cell cDNA encoding a 5-hydroxytryptamine1B receptor.</title>
        <authorList>
            <person name="Cerutis D."/>
            <person name="Hass N.A."/>
            <person name="Iversen L.J."/>
            <person name="Bylund D.B."/>
        </authorList>
    </citation>
    <scope>NUCLEOTIDE SEQUENCE [MRNA]</scope>
    <scope>FUNCTION</scope>
    <scope>SUBCELLULAR LOCATION</scope>
    <source>
        <tissue>Kidney</tissue>
    </source>
</reference>
<accession>P35404</accession>
<dbReference type="EMBL" id="U04311">
    <property type="protein sequence ID" value="AAA17567.1"/>
    <property type="molecule type" value="mRNA"/>
</dbReference>
<dbReference type="SMR" id="P35404"/>
<dbReference type="GlyCosmos" id="P35404">
    <property type="glycosylation" value="2 sites, No reported glycans"/>
</dbReference>
<dbReference type="GO" id="GO:0005886">
    <property type="term" value="C:plasma membrane"/>
    <property type="evidence" value="ECO:0000250"/>
    <property type="project" value="UniProtKB"/>
</dbReference>
<dbReference type="GO" id="GO:0045202">
    <property type="term" value="C:synapse"/>
    <property type="evidence" value="ECO:0007669"/>
    <property type="project" value="GOC"/>
</dbReference>
<dbReference type="GO" id="GO:0004993">
    <property type="term" value="F:G protein-coupled serotonin receptor activity"/>
    <property type="evidence" value="ECO:0000250"/>
    <property type="project" value="UniProtKB"/>
</dbReference>
<dbReference type="GO" id="GO:0071880">
    <property type="term" value="P:adenylate cyclase-activating adrenergic receptor signaling pathway"/>
    <property type="evidence" value="ECO:0007669"/>
    <property type="project" value="TreeGrafter"/>
</dbReference>
<dbReference type="GO" id="GO:0007198">
    <property type="term" value="P:adenylate cyclase-inhibiting serotonin receptor signaling pathway"/>
    <property type="evidence" value="ECO:0000250"/>
    <property type="project" value="UniProtKB"/>
</dbReference>
<dbReference type="GO" id="GO:0046849">
    <property type="term" value="P:bone remodeling"/>
    <property type="evidence" value="ECO:0007669"/>
    <property type="project" value="InterPro"/>
</dbReference>
<dbReference type="GO" id="GO:0071312">
    <property type="term" value="P:cellular response to alkaloid"/>
    <property type="evidence" value="ECO:0000250"/>
    <property type="project" value="UniProtKB"/>
</dbReference>
<dbReference type="GO" id="GO:0071466">
    <property type="term" value="P:cellular response to xenobiotic stimulus"/>
    <property type="evidence" value="ECO:0000250"/>
    <property type="project" value="UniProtKB"/>
</dbReference>
<dbReference type="GO" id="GO:0007268">
    <property type="term" value="P:chemical synaptic transmission"/>
    <property type="evidence" value="ECO:0007669"/>
    <property type="project" value="InterPro"/>
</dbReference>
<dbReference type="GO" id="GO:0014063">
    <property type="term" value="P:negative regulation of serotonin secretion"/>
    <property type="evidence" value="ECO:0000250"/>
    <property type="project" value="UniProtKB"/>
</dbReference>
<dbReference type="GO" id="GO:0043410">
    <property type="term" value="P:positive regulation of MAPK cascade"/>
    <property type="evidence" value="ECO:0007669"/>
    <property type="project" value="TreeGrafter"/>
</dbReference>
<dbReference type="GO" id="GO:0050795">
    <property type="term" value="P:regulation of behavior"/>
    <property type="evidence" value="ECO:0007669"/>
    <property type="project" value="InterPro"/>
</dbReference>
<dbReference type="GO" id="GO:0042310">
    <property type="term" value="P:vasoconstriction"/>
    <property type="evidence" value="ECO:0007669"/>
    <property type="project" value="InterPro"/>
</dbReference>
<dbReference type="CDD" id="cd15333">
    <property type="entry name" value="7tmA_5-HT1B_1D"/>
    <property type="match status" value="1"/>
</dbReference>
<dbReference type="Gene3D" id="1.20.1070.10">
    <property type="entry name" value="Rhodopsin 7-helix transmembrane proteins"/>
    <property type="match status" value="1"/>
</dbReference>
<dbReference type="InterPro" id="IPR002147">
    <property type="entry name" value="5HT1B_rcpt"/>
</dbReference>
<dbReference type="InterPro" id="IPR002231">
    <property type="entry name" value="5HT_rcpt"/>
</dbReference>
<dbReference type="InterPro" id="IPR000276">
    <property type="entry name" value="GPCR_Rhodpsn"/>
</dbReference>
<dbReference type="InterPro" id="IPR017452">
    <property type="entry name" value="GPCR_Rhodpsn_7TM"/>
</dbReference>
<dbReference type="PANTHER" id="PTHR24248:SF201">
    <property type="entry name" value="5-HYDROXYTRYPTAMINE RECEPTOR 1B"/>
    <property type="match status" value="1"/>
</dbReference>
<dbReference type="PANTHER" id="PTHR24248">
    <property type="entry name" value="ADRENERGIC RECEPTOR-RELATED G-PROTEIN COUPLED RECEPTOR"/>
    <property type="match status" value="1"/>
</dbReference>
<dbReference type="Pfam" id="PF00001">
    <property type="entry name" value="7tm_1"/>
    <property type="match status" value="1"/>
</dbReference>
<dbReference type="PRINTS" id="PR00513">
    <property type="entry name" value="5HT1BRECEPTR"/>
</dbReference>
<dbReference type="PRINTS" id="PR01101">
    <property type="entry name" value="5HTRECEPTOR"/>
</dbReference>
<dbReference type="PRINTS" id="PR00237">
    <property type="entry name" value="GPCRRHODOPSN"/>
</dbReference>
<dbReference type="SMART" id="SM01381">
    <property type="entry name" value="7TM_GPCR_Srsx"/>
    <property type="match status" value="1"/>
</dbReference>
<dbReference type="SUPFAM" id="SSF81321">
    <property type="entry name" value="Family A G protein-coupled receptor-like"/>
    <property type="match status" value="1"/>
</dbReference>
<dbReference type="PROSITE" id="PS00237">
    <property type="entry name" value="G_PROTEIN_RECEP_F1_1"/>
    <property type="match status" value="1"/>
</dbReference>
<dbReference type="PROSITE" id="PS50262">
    <property type="entry name" value="G_PROTEIN_RECEP_F1_2"/>
    <property type="match status" value="1"/>
</dbReference>
<evidence type="ECO:0000250" key="1">
    <source>
        <dbReference type="UniProtKB" id="P28222"/>
    </source>
</evidence>
<evidence type="ECO:0000250" key="2">
    <source>
        <dbReference type="UniProtKB" id="P41595"/>
    </source>
</evidence>
<evidence type="ECO:0000255" key="3"/>
<evidence type="ECO:0000255" key="4">
    <source>
        <dbReference type="PROSITE-ProRule" id="PRU00521"/>
    </source>
</evidence>
<evidence type="ECO:0000256" key="5">
    <source>
        <dbReference type="SAM" id="MobiDB-lite"/>
    </source>
</evidence>
<evidence type="ECO:0000269" key="6">
    <source>
    </source>
</evidence>
<sequence length="388" mass="43111">MEQPSRLCSPPASGSLTSSQTNHSTFPNPNCSAPDLEPYQDSIALPWKVLLATFLGLITLGTTLSNAFVIATVSRTRKLHTPANYLIASLAVTDLLVSILVMPISTMYTVTGRWTLGQVVCDFWLSSDITCCTASILHLCVIALDRYWAITDAVEYSAKRTPKRAAGMIIMVWVFSVSISMPPLFWRQAKAEEVADCSVNTDHILYTVYSTVGAFYFPTLLLIALYGRIYVEARSRILKQTPNRTGKRLTRAQLITDSPGSSSSGTSINSRAPEGPSESGSPVYVNQVKVKVSDALLEKKKLMAARERKATRTLGIILGAFIVCWLPFFIISLALPICDDACWFHLAIFDFFNWLGYLNSLINPIIYTKSNDDFKQAFQKLMRFRRTS</sequence>
<name>5HT1B_DIDVI</name>
<gene>
    <name type="primary">HTR1B</name>
</gene>
<keyword id="KW-0085">Behavior</keyword>
<keyword id="KW-1003">Cell membrane</keyword>
<keyword id="KW-1015">Disulfide bond</keyword>
<keyword id="KW-0297">G-protein coupled receptor</keyword>
<keyword id="KW-0325">Glycoprotein</keyword>
<keyword id="KW-0449">Lipoprotein</keyword>
<keyword id="KW-0472">Membrane</keyword>
<keyword id="KW-0564">Palmitate</keyword>
<keyword id="KW-0597">Phosphoprotein</keyword>
<keyword id="KW-0675">Receptor</keyword>
<keyword id="KW-0807">Transducer</keyword>
<keyword id="KW-0812">Transmembrane</keyword>
<keyword id="KW-1133">Transmembrane helix</keyword>
<organism>
    <name type="scientific">Didelphis virginiana</name>
    <name type="common">North American opossum</name>
    <name type="synonym">Didelphis marsupialis virginiana</name>
    <dbReference type="NCBI Taxonomy" id="9267"/>
    <lineage>
        <taxon>Eukaryota</taxon>
        <taxon>Metazoa</taxon>
        <taxon>Chordata</taxon>
        <taxon>Craniata</taxon>
        <taxon>Vertebrata</taxon>
        <taxon>Euteleostomi</taxon>
        <taxon>Mammalia</taxon>
        <taxon>Metatheria</taxon>
        <taxon>Didelphimorphia</taxon>
        <taxon>Didelphidae</taxon>
        <taxon>Didelphis</taxon>
    </lineage>
</organism>
<protein>
    <recommendedName>
        <fullName>5-hydroxytryptamine receptor 1B</fullName>
        <shortName>5-HT-1B</shortName>
        <shortName>5-HT1B</shortName>
    </recommendedName>
    <alternativeName>
        <fullName>Serotonin receptor 1B</fullName>
    </alternativeName>
</protein>
<comment type="function">
    <text evidence="1 6">G-protein coupled receptor for 5-hydroxytryptamine (serotonin) (PubMed:8302276). Also functions as a receptor for ergot alkaloid derivatives, various anxiolytic and antidepressant drugs and other psychoactive substances, such as lysergic acid diethylamide (LSD). Ligand binding causes a conformation change that triggers signaling via guanine nucleotide-binding proteins (G proteins) and modulates the activity of downstream effectors, such as adenylate cyclase. HTR1B is coupled to G(i)/G(o) G alpha proteins and mediates inhibitory neurotransmission by inhibiting adenylate cyclase activity. Arrestin family members inhibit signaling via G proteins and mediate activation of alternative signaling pathways. Regulates the release of 5-hydroxytryptamine, dopamine and acetylcholine in the brain, and thereby affects neural activity, nociceptive processing, pain perception, mood and behavior. Besides, plays a role in vasoconstriction of cerebral arteries (By similarity).</text>
</comment>
<comment type="subunit">
    <text evidence="1">Homodimer. Heterodimer with HTR1D.</text>
</comment>
<comment type="subcellular location">
    <subcellularLocation>
        <location evidence="6">Cell membrane</location>
        <topology evidence="3">Multi-pass membrane protein</topology>
    </subcellularLocation>
</comment>
<comment type="domain">
    <text evidence="1">Ligands are bound in a hydrophobic pocket formed by the transmembrane helices.</text>
</comment>
<comment type="domain">
    <text evidence="1">A residue in the 7th transmembrane region ('Thr-355' in human, 'Asn-351' in mouse and rat) is important for species-specific sensitivity to various agonists.</text>
</comment>
<comment type="PTM">
    <text evidence="1">Phosphorylated. Desensitization of the receptor may be mediated by its phosphorylation.</text>
</comment>
<comment type="PTM">
    <text evidence="1">Palmitoylated.</text>
</comment>
<comment type="similarity">
    <text evidence="4">Belongs to the G-protein coupled receptor 1 family.</text>
</comment>
<proteinExistence type="evidence at transcript level"/>